<feature type="signal peptide" evidence="1">
    <location>
        <begin position="1"/>
        <end position="29"/>
    </location>
</feature>
<feature type="chain" id="PRO_0000367054" description="Butyrophilin subfamily 2 member A2">
    <location>
        <begin position="30"/>
        <end position="514"/>
    </location>
</feature>
<feature type="topological domain" description="Extracellular" evidence="1">
    <location>
        <begin position="30"/>
        <end position="244"/>
    </location>
</feature>
<feature type="transmembrane region" description="Helical" evidence="1">
    <location>
        <begin position="245"/>
        <end position="265"/>
    </location>
</feature>
<feature type="topological domain" description="Cytoplasmic" evidence="1">
    <location>
        <begin position="266"/>
        <end position="514"/>
    </location>
</feature>
<feature type="domain" description="Ig-like V-type">
    <location>
        <begin position="30"/>
        <end position="142"/>
    </location>
</feature>
<feature type="domain" description="Ig-like C2-type">
    <location>
        <begin position="150"/>
        <end position="232"/>
    </location>
</feature>
<feature type="domain" description="B30.2/SPRY" evidence="3">
    <location>
        <begin position="295"/>
        <end position="488"/>
    </location>
</feature>
<feature type="coiled-coil region" evidence="1">
    <location>
        <begin position="281"/>
        <end position="304"/>
    </location>
</feature>
<feature type="glycosylation site" description="N-linked (GlcNAc...) asparagine" evidence="1">
    <location>
        <position position="47"/>
    </location>
</feature>
<feature type="glycosylation site" description="N-linked (GlcNAc...) asparagine" evidence="1">
    <location>
        <position position="115"/>
    </location>
</feature>
<feature type="disulfide bond" evidence="2">
    <location>
        <begin position="52"/>
        <end position="126"/>
    </location>
</feature>
<feature type="disulfide bond" evidence="2">
    <location>
        <begin position="166"/>
        <end position="220"/>
    </location>
</feature>
<feature type="splice variant" id="VSP_036621" description="In isoform 2." evidence="5">
    <location>
        <begin position="372"/>
        <end position="400"/>
    </location>
</feature>
<feature type="splice variant" id="VSP_036622" description="In isoform 2." evidence="5">
    <original>IIPLKERLHRIAVFLDCEGGDISFYNMRDR</original>
    <variation>DHTSERASSPYSCLPGL</variation>
    <location>
        <begin position="422"/>
        <end position="451"/>
    </location>
</feature>
<evidence type="ECO:0000255" key="1"/>
<evidence type="ECO:0000255" key="2">
    <source>
        <dbReference type="PROSITE-ProRule" id="PRU00114"/>
    </source>
</evidence>
<evidence type="ECO:0000255" key="3">
    <source>
        <dbReference type="PROSITE-ProRule" id="PRU00548"/>
    </source>
</evidence>
<evidence type="ECO:0000269" key="4">
    <source>
    </source>
</evidence>
<evidence type="ECO:0000303" key="5">
    <source ref="1"/>
</evidence>
<evidence type="ECO:0000305" key="6"/>
<comment type="function">
    <text evidence="4">Inhibits the proliferation of CD4 and CD8 T-cells activated by anti-CD3 antibodies, T-cell metabolism and IL2 and IFNG secretion.</text>
</comment>
<comment type="subcellular location">
    <subcellularLocation>
        <location evidence="6">Membrane</location>
        <topology evidence="6">Single-pass type I membrane protein</topology>
    </subcellularLocation>
</comment>
<comment type="alternative products">
    <event type="alternative splicing"/>
    <isoform>
        <id>A4QPC6-1</id>
        <name>1</name>
        <sequence type="displayed"/>
    </isoform>
    <isoform>
        <id>A4QPC6-2</id>
        <name>2</name>
        <sequence type="described" ref="VSP_036621 VSP_036622"/>
    </isoform>
</comment>
<comment type="tissue specificity">
    <text evidence="4">Widely expressed (at protein level). In the thymus, restricted to the corticomedullary junction, but not confined solely to epithelial cells (at protein level). Significant expression on naive B-cells, splenic natural killer cells, dendritic cells and peritoneal macrophages (at protein level). Negligible expression on naive T-cells up-regulated on activated T-cells (at protein level).</text>
</comment>
<comment type="PTM">
    <text evidence="4">N-glycosylated.</text>
</comment>
<comment type="similarity">
    <text evidence="6">Belongs to the immunoglobulin superfamily. BTN/MOG family.</text>
</comment>
<gene>
    <name type="primary">Btn2a2</name>
</gene>
<reference key="1">
    <citation type="submission" date="2002-11" db="EMBL/GenBank/DDBJ databases">
        <title>Comparison of the butyrophilin cluster in human and mouse.</title>
        <authorList>
            <person name="Meyer M."/>
            <person name="Trowsdale J."/>
        </authorList>
    </citation>
    <scope>NUCLEOTIDE SEQUENCE [MRNA] (ISOFORM 2)</scope>
</reference>
<reference key="2">
    <citation type="journal article" date="2004" name="Genome Res.">
        <title>The status, quality, and expansion of the NIH full-length cDNA project: the Mammalian Gene Collection (MGC).</title>
        <authorList>
            <consortium name="The MGC Project Team"/>
        </authorList>
    </citation>
    <scope>NUCLEOTIDE SEQUENCE [LARGE SCALE MRNA] (ISOFORM 1)</scope>
</reference>
<reference key="3">
    <citation type="journal article" date="2010" name="J. Immunol.">
        <title>BTN1A1, the mammary gland butyrophilin, and BTN2A2 are both inhibitors of T cell activation.</title>
        <authorList>
            <person name="Smith I.A."/>
            <person name="Knezevic B.R."/>
            <person name="Ammann J.U."/>
            <person name="Rhodes D.A."/>
            <person name="Aw D."/>
            <person name="Palmer D.B."/>
            <person name="Mather I.H."/>
            <person name="Trowsdale J."/>
        </authorList>
    </citation>
    <scope>FUNCTION</scope>
    <scope>TISSUE SPECIFICITY</scope>
    <scope>GLYCOSYLATION</scope>
</reference>
<dbReference type="EMBL" id="AY177686">
    <property type="protein sequence ID" value="AAO38196.1"/>
    <property type="molecule type" value="mRNA"/>
</dbReference>
<dbReference type="EMBL" id="BC139760">
    <property type="protein sequence ID" value="AAI39761.1"/>
    <property type="molecule type" value="mRNA"/>
</dbReference>
<dbReference type="CCDS" id="CCDS36619.1">
    <molecule id="A4QPC6-1"/>
</dbReference>
<dbReference type="RefSeq" id="NP_001276544.1">
    <molecule id="A4QPC6-1"/>
    <property type="nucleotide sequence ID" value="NM_001289615.1"/>
</dbReference>
<dbReference type="RefSeq" id="NP_787952.2">
    <molecule id="A4QPC6-1"/>
    <property type="nucleotide sequence ID" value="NM_175938.3"/>
</dbReference>
<dbReference type="RefSeq" id="XP_006516727.1">
    <molecule id="A4QPC6-1"/>
    <property type="nucleotide sequence ID" value="XM_006516664.1"/>
</dbReference>
<dbReference type="SMR" id="A4QPC6"/>
<dbReference type="BioGRID" id="231995">
    <property type="interactions" value="1"/>
</dbReference>
<dbReference type="FunCoup" id="A4QPC6">
    <property type="interactions" value="359"/>
</dbReference>
<dbReference type="STRING" id="10090.ENSMUSP00000106063"/>
<dbReference type="GlyCosmos" id="A4QPC6">
    <property type="glycosylation" value="2 sites, No reported glycans"/>
</dbReference>
<dbReference type="GlyGen" id="A4QPC6">
    <property type="glycosylation" value="2 sites"/>
</dbReference>
<dbReference type="iPTMnet" id="A4QPC6"/>
<dbReference type="PhosphoSitePlus" id="A4QPC6"/>
<dbReference type="PaxDb" id="10090-ENSMUSP00000106063"/>
<dbReference type="ProteomicsDB" id="265250">
    <molecule id="A4QPC6-1"/>
</dbReference>
<dbReference type="ProteomicsDB" id="265251">
    <molecule id="A4QPC6-2"/>
</dbReference>
<dbReference type="Antibodypedia" id="44597">
    <property type="antibodies" value="129 antibodies from 20 providers"/>
</dbReference>
<dbReference type="DNASU" id="238555"/>
<dbReference type="Ensembl" id="ENSMUST00000110432.2">
    <molecule id="A4QPC6-1"/>
    <property type="protein sequence ID" value="ENSMUSP00000106062.2"/>
    <property type="gene ID" value="ENSMUSG00000053216.16"/>
</dbReference>
<dbReference type="Ensembl" id="ENSMUST00000110433.10">
    <molecule id="A4QPC6-1"/>
    <property type="protein sequence ID" value="ENSMUSP00000106063.4"/>
    <property type="gene ID" value="ENSMUSG00000053216.16"/>
</dbReference>
<dbReference type="GeneID" id="238555"/>
<dbReference type="KEGG" id="mmu:238555"/>
<dbReference type="UCSC" id="uc007ptu.1">
    <molecule id="A4QPC6-1"/>
    <property type="organism name" value="mouse"/>
</dbReference>
<dbReference type="AGR" id="MGI:3606486"/>
<dbReference type="CTD" id="10385"/>
<dbReference type="MGI" id="MGI:3606486">
    <property type="gene designation" value="Btn2a2"/>
</dbReference>
<dbReference type="VEuPathDB" id="HostDB:ENSMUSG00000053216"/>
<dbReference type="eggNOG" id="ENOG502QSRZ">
    <property type="taxonomic scope" value="Eukaryota"/>
</dbReference>
<dbReference type="GeneTree" id="ENSGT00940000158017"/>
<dbReference type="HOGENOM" id="CLU_013137_22_2_1"/>
<dbReference type="InParanoid" id="A4QPC6"/>
<dbReference type="OMA" id="AETHHNH"/>
<dbReference type="OrthoDB" id="9986391at2759"/>
<dbReference type="PhylomeDB" id="A4QPC6"/>
<dbReference type="TreeFam" id="TF331083"/>
<dbReference type="Reactome" id="R-MMU-8851680">
    <property type="pathway name" value="Butyrophilin (BTN) family interactions"/>
</dbReference>
<dbReference type="BioGRID-ORCS" id="238555">
    <property type="hits" value="3 hits in 82 CRISPR screens"/>
</dbReference>
<dbReference type="PRO" id="PR:A4QPC6"/>
<dbReference type="Proteomes" id="UP000000589">
    <property type="component" value="Chromosome 13"/>
</dbReference>
<dbReference type="RNAct" id="A4QPC6">
    <property type="molecule type" value="protein"/>
</dbReference>
<dbReference type="Bgee" id="ENSMUSG00000053216">
    <property type="expression patterns" value="Expressed in mesodermal cell in embryo and 21 other cell types or tissues"/>
</dbReference>
<dbReference type="ExpressionAtlas" id="A4QPC6">
    <property type="expression patterns" value="baseline and differential"/>
</dbReference>
<dbReference type="GO" id="GO:0009986">
    <property type="term" value="C:cell surface"/>
    <property type="evidence" value="ECO:0000314"/>
    <property type="project" value="MGI"/>
</dbReference>
<dbReference type="GO" id="GO:0016020">
    <property type="term" value="C:membrane"/>
    <property type="evidence" value="ECO:0007669"/>
    <property type="project" value="UniProtKB-SubCell"/>
</dbReference>
<dbReference type="GO" id="GO:0070371">
    <property type="term" value="P:ERK1 and ERK2 cascade"/>
    <property type="evidence" value="ECO:0000314"/>
    <property type="project" value="MGI"/>
</dbReference>
<dbReference type="GO" id="GO:0000082">
    <property type="term" value="P:G1/S transition of mitotic cell cycle"/>
    <property type="evidence" value="ECO:0000314"/>
    <property type="project" value="MGI"/>
</dbReference>
<dbReference type="GO" id="GO:0046007">
    <property type="term" value="P:negative regulation of activated T cell proliferation"/>
    <property type="evidence" value="ECO:0000314"/>
    <property type="project" value="UniProtKB"/>
</dbReference>
<dbReference type="GO" id="GO:0001818">
    <property type="term" value="P:negative regulation of cytokine production"/>
    <property type="evidence" value="ECO:0000314"/>
    <property type="project" value="UniProtKB"/>
</dbReference>
<dbReference type="GO" id="GO:0070373">
    <property type="term" value="P:negative regulation of ERK1 and ERK2 cascade"/>
    <property type="evidence" value="ECO:0000314"/>
    <property type="project" value="MGI"/>
</dbReference>
<dbReference type="GO" id="GO:2000134">
    <property type="term" value="P:negative regulation of G1/S transition of mitotic cell cycle"/>
    <property type="evidence" value="ECO:0000314"/>
    <property type="project" value="MGI"/>
</dbReference>
<dbReference type="GO" id="GO:0051898">
    <property type="term" value="P:negative regulation of phosphatidylinositol 3-kinase/protein kinase B signal transduction"/>
    <property type="evidence" value="ECO:0000316"/>
    <property type="project" value="MGI"/>
</dbReference>
<dbReference type="GO" id="GO:0050860">
    <property type="term" value="P:negative regulation of T cell receptor signaling pathway"/>
    <property type="evidence" value="ECO:0000314"/>
    <property type="project" value="MGI"/>
</dbReference>
<dbReference type="GO" id="GO:0043491">
    <property type="term" value="P:phosphatidylinositol 3-kinase/protein kinase B signal transduction"/>
    <property type="evidence" value="ECO:0000316"/>
    <property type="project" value="MGI"/>
</dbReference>
<dbReference type="GO" id="GO:0045591">
    <property type="term" value="P:positive regulation of regulatory T cell differentiation"/>
    <property type="evidence" value="ECO:0000314"/>
    <property type="project" value="MGI"/>
</dbReference>
<dbReference type="CDD" id="cd05713">
    <property type="entry name" value="IgV_MOG_like"/>
    <property type="match status" value="1"/>
</dbReference>
<dbReference type="CDD" id="cd15819">
    <property type="entry name" value="SPRY_PRY_BTN1_2"/>
    <property type="match status" value="1"/>
</dbReference>
<dbReference type="FunFam" id="2.60.120.920:FF:000004">
    <property type="entry name" value="Butyrophilin subfamily 1 member A1"/>
    <property type="match status" value="1"/>
</dbReference>
<dbReference type="FunFam" id="2.60.40.10:FF:000088">
    <property type="entry name" value="Butyrophilin subfamily 1 member A1"/>
    <property type="match status" value="1"/>
</dbReference>
<dbReference type="FunFam" id="2.60.40.10:FF:000208">
    <property type="entry name" value="Butyrophilin subfamily 1 member A1"/>
    <property type="match status" value="1"/>
</dbReference>
<dbReference type="Gene3D" id="2.60.120.920">
    <property type="match status" value="1"/>
</dbReference>
<dbReference type="Gene3D" id="2.60.40.10">
    <property type="entry name" value="Immunoglobulins"/>
    <property type="match status" value="2"/>
</dbReference>
<dbReference type="InterPro" id="IPR001870">
    <property type="entry name" value="B30.2/SPRY"/>
</dbReference>
<dbReference type="InterPro" id="IPR043136">
    <property type="entry name" value="B30.2/SPRY_sf"/>
</dbReference>
<dbReference type="InterPro" id="IPR053896">
    <property type="entry name" value="BTN3A2-like_Ig-C"/>
</dbReference>
<dbReference type="InterPro" id="IPR003879">
    <property type="entry name" value="Butyrophylin_SPRY"/>
</dbReference>
<dbReference type="InterPro" id="IPR013320">
    <property type="entry name" value="ConA-like_dom_sf"/>
</dbReference>
<dbReference type="InterPro" id="IPR007110">
    <property type="entry name" value="Ig-like_dom"/>
</dbReference>
<dbReference type="InterPro" id="IPR036179">
    <property type="entry name" value="Ig-like_dom_sf"/>
</dbReference>
<dbReference type="InterPro" id="IPR013783">
    <property type="entry name" value="Ig-like_fold"/>
</dbReference>
<dbReference type="InterPro" id="IPR003599">
    <property type="entry name" value="Ig_sub"/>
</dbReference>
<dbReference type="InterPro" id="IPR013106">
    <property type="entry name" value="Ig_V-set"/>
</dbReference>
<dbReference type="InterPro" id="IPR050504">
    <property type="entry name" value="IgSF_BTN/MOG"/>
</dbReference>
<dbReference type="InterPro" id="IPR006574">
    <property type="entry name" value="PRY"/>
</dbReference>
<dbReference type="InterPro" id="IPR037958">
    <property type="entry name" value="SPRY/PRY_BTN1/2"/>
</dbReference>
<dbReference type="InterPro" id="IPR003877">
    <property type="entry name" value="SPRY_dom"/>
</dbReference>
<dbReference type="PANTHER" id="PTHR24100">
    <property type="entry name" value="BUTYROPHILIN"/>
    <property type="match status" value="1"/>
</dbReference>
<dbReference type="PANTHER" id="PTHR24100:SF139">
    <property type="entry name" value="BUTYROPHILIN SUBFAMILY 2 MEMBER A2"/>
    <property type="match status" value="1"/>
</dbReference>
<dbReference type="Pfam" id="PF22705">
    <property type="entry name" value="C2-set_3"/>
    <property type="match status" value="1"/>
</dbReference>
<dbReference type="Pfam" id="PF13765">
    <property type="entry name" value="PRY"/>
    <property type="match status" value="1"/>
</dbReference>
<dbReference type="Pfam" id="PF00622">
    <property type="entry name" value="SPRY"/>
    <property type="match status" value="1"/>
</dbReference>
<dbReference type="Pfam" id="PF07686">
    <property type="entry name" value="V-set"/>
    <property type="match status" value="1"/>
</dbReference>
<dbReference type="PRINTS" id="PR01407">
    <property type="entry name" value="BUTYPHLNCDUF"/>
</dbReference>
<dbReference type="SMART" id="SM00409">
    <property type="entry name" value="IG"/>
    <property type="match status" value="1"/>
</dbReference>
<dbReference type="SMART" id="SM00406">
    <property type="entry name" value="IGv"/>
    <property type="match status" value="1"/>
</dbReference>
<dbReference type="SMART" id="SM00589">
    <property type="entry name" value="PRY"/>
    <property type="match status" value="1"/>
</dbReference>
<dbReference type="SMART" id="SM00449">
    <property type="entry name" value="SPRY"/>
    <property type="match status" value="1"/>
</dbReference>
<dbReference type="SUPFAM" id="SSF49899">
    <property type="entry name" value="Concanavalin A-like lectins/glucanases"/>
    <property type="match status" value="1"/>
</dbReference>
<dbReference type="SUPFAM" id="SSF48726">
    <property type="entry name" value="Immunoglobulin"/>
    <property type="match status" value="2"/>
</dbReference>
<dbReference type="PROSITE" id="PS50188">
    <property type="entry name" value="B302_SPRY"/>
    <property type="match status" value="1"/>
</dbReference>
<dbReference type="PROSITE" id="PS50835">
    <property type="entry name" value="IG_LIKE"/>
    <property type="match status" value="2"/>
</dbReference>
<organism>
    <name type="scientific">Mus musculus</name>
    <name type="common">Mouse</name>
    <dbReference type="NCBI Taxonomy" id="10090"/>
    <lineage>
        <taxon>Eukaryota</taxon>
        <taxon>Metazoa</taxon>
        <taxon>Chordata</taxon>
        <taxon>Craniata</taxon>
        <taxon>Vertebrata</taxon>
        <taxon>Euteleostomi</taxon>
        <taxon>Mammalia</taxon>
        <taxon>Eutheria</taxon>
        <taxon>Euarchontoglires</taxon>
        <taxon>Glires</taxon>
        <taxon>Rodentia</taxon>
        <taxon>Myomorpha</taxon>
        <taxon>Muroidea</taxon>
        <taxon>Muridae</taxon>
        <taxon>Murinae</taxon>
        <taxon>Mus</taxon>
        <taxon>Mus</taxon>
    </lineage>
</organism>
<sequence length="514" mass="58455">MEPTTSLRSCPIASLLFFLVLSLFVLVSAQFTVIGPAEPILAMVGENTTLHCHLSPERNAEEMEVRWFRWRFFPAVLVYRGHQERPEEQMVAYRGRTTFMRTDISKGRVALIIHNVTAYDNGIYCCYFQEGRSYDQATMKLMVASLGSEPLIKMKTLEDGSILLECTSEGWYPEPRAVWRDPYDEVVPALEEEYTADREGLFTVTMTIIIRDCSVRNMTCSVNNTLLSQEVESVILIPESFVPSLPLWMVAVAVTLPVVMLILLTSGSICLVKKHRRKKSILSAEKEAEYEEKEAARQLQEELRWRRTLLHAADVVLDPDTAHPELFLSDDQRSVIRGSSRQSVPDNPERFDCRPCVLGRESFSSGKHYWEVEVENVMVWAIGVCRDSVERKGEALLVPQNGFWTLEMFGSQYRALSSPEKIIPLKERLHRIAVFLDCEGGDISFYNMRDRSHIYTCPPVTFTGPLRPFFRLGSDDSPLFICPAFTGAQGVTIPEGGLFLYKTRPISQSLVRKP</sequence>
<name>BT2A2_MOUSE</name>
<proteinExistence type="evidence at protein level"/>
<keyword id="KW-0025">Alternative splicing</keyword>
<keyword id="KW-0175">Coiled coil</keyword>
<keyword id="KW-1015">Disulfide bond</keyword>
<keyword id="KW-0325">Glycoprotein</keyword>
<keyword id="KW-0393">Immunoglobulin domain</keyword>
<keyword id="KW-0472">Membrane</keyword>
<keyword id="KW-1185">Reference proteome</keyword>
<keyword id="KW-0732">Signal</keyword>
<keyword id="KW-0812">Transmembrane</keyword>
<keyword id="KW-1133">Transmembrane helix</keyword>
<protein>
    <recommendedName>
        <fullName>Butyrophilin subfamily 2 member A2</fullName>
    </recommendedName>
</protein>
<accession>A4QPC6</accession>
<accession>Q811T8</accession>